<sequence>MIMSLSILYILPEILLALGVIVVMFSGLFLHGKIRNINYIFFQVFTLLALIATFAKEYLIQTTGLVFEGQVVFSGFAYTLQLVILVLAVFVALYSRDYVKDRKISDGDFYTLLMLCVLGAMVLTAAHSLVTIYVGLELLSLPMYALIAIYRDSGKGLEAAIKYFVLGAIASALLLFGMSFVYGMTGKLDITEIANVLAHGNFAGLQQQFLLVYLVMMIATFLFKLGAFPFHMWLPDVYQGAPNAVANIVATIPKVAAFAMLVNILFVGFPSLKDSWIYLFRIIGILSIFFGSLVALSQTNVKRLLGYSTVSQIGFVLLATTLNPQGYALTAASFYVIVYLFTTLAVFGVLTTISVGGYEVQDLNDLKGFNTKDSWLAFILLIVLFSMAGIPPFGGFIAKLFVVMGLINDGNYFLACFVLFMAVIASFYYVRVIKTMYFDDPDNDETVKPPLTSLIALSINGLVLLFLGIMPMLLLGVLTQVTNVI</sequence>
<keyword id="KW-0997">Cell inner membrane</keyword>
<keyword id="KW-1003">Cell membrane</keyword>
<keyword id="KW-0472">Membrane</keyword>
<keyword id="KW-0520">NAD</keyword>
<keyword id="KW-0874">Quinone</keyword>
<keyword id="KW-1278">Translocase</keyword>
<keyword id="KW-0812">Transmembrane</keyword>
<keyword id="KW-1133">Transmembrane helix</keyword>
<keyword id="KW-0813">Transport</keyword>
<keyword id="KW-0830">Ubiquinone</keyword>
<protein>
    <recommendedName>
        <fullName evidence="1">NADH-quinone oxidoreductase subunit N</fullName>
        <ecNumber evidence="1">7.1.1.-</ecNumber>
    </recommendedName>
    <alternativeName>
        <fullName evidence="1">NADH dehydrogenase I subunit N</fullName>
    </alternativeName>
    <alternativeName>
        <fullName evidence="1">NDH-1 subunit N</fullName>
    </alternativeName>
</protein>
<accession>A7NEJ7</accession>
<dbReference type="EC" id="7.1.1.-" evidence="1"/>
<dbReference type="EMBL" id="CP000803">
    <property type="protein sequence ID" value="ABU62400.2"/>
    <property type="molecule type" value="Genomic_DNA"/>
</dbReference>
<dbReference type="SMR" id="A7NEJ7"/>
<dbReference type="KEGG" id="fta:FTA_1925"/>
<dbReference type="HOGENOM" id="CLU_007100_1_1_6"/>
<dbReference type="GO" id="GO:0005886">
    <property type="term" value="C:plasma membrane"/>
    <property type="evidence" value="ECO:0007669"/>
    <property type="project" value="UniProtKB-SubCell"/>
</dbReference>
<dbReference type="GO" id="GO:0008137">
    <property type="term" value="F:NADH dehydrogenase (ubiquinone) activity"/>
    <property type="evidence" value="ECO:0007669"/>
    <property type="project" value="InterPro"/>
</dbReference>
<dbReference type="GO" id="GO:0050136">
    <property type="term" value="F:NADH:ubiquinone reductase (non-electrogenic) activity"/>
    <property type="evidence" value="ECO:0007669"/>
    <property type="project" value="UniProtKB-UniRule"/>
</dbReference>
<dbReference type="GO" id="GO:0048038">
    <property type="term" value="F:quinone binding"/>
    <property type="evidence" value="ECO:0007669"/>
    <property type="project" value="UniProtKB-KW"/>
</dbReference>
<dbReference type="GO" id="GO:0042773">
    <property type="term" value="P:ATP synthesis coupled electron transport"/>
    <property type="evidence" value="ECO:0007669"/>
    <property type="project" value="InterPro"/>
</dbReference>
<dbReference type="HAMAP" id="MF_00445">
    <property type="entry name" value="NDH1_NuoN_1"/>
    <property type="match status" value="1"/>
</dbReference>
<dbReference type="InterPro" id="IPR010096">
    <property type="entry name" value="NADH-Q_OxRdtase_suN/2"/>
</dbReference>
<dbReference type="InterPro" id="IPR001750">
    <property type="entry name" value="ND/Mrp_TM"/>
</dbReference>
<dbReference type="NCBIfam" id="TIGR01770">
    <property type="entry name" value="NDH_I_N"/>
    <property type="match status" value="1"/>
</dbReference>
<dbReference type="PANTHER" id="PTHR22773">
    <property type="entry name" value="NADH DEHYDROGENASE"/>
    <property type="match status" value="1"/>
</dbReference>
<dbReference type="Pfam" id="PF00361">
    <property type="entry name" value="Proton_antipo_M"/>
    <property type="match status" value="1"/>
</dbReference>
<dbReference type="PRINTS" id="PR01434">
    <property type="entry name" value="NADHDHGNASE5"/>
</dbReference>
<name>NUON_FRATF</name>
<comment type="function">
    <text evidence="1">NDH-1 shuttles electrons from NADH, via FMN and iron-sulfur (Fe-S) centers, to quinones in the respiratory chain. The immediate electron acceptor for the enzyme in this species is believed to be ubiquinone. Couples the redox reaction to proton translocation (for every two electrons transferred, four hydrogen ions are translocated across the cytoplasmic membrane), and thus conserves the redox energy in a proton gradient.</text>
</comment>
<comment type="catalytic activity">
    <reaction evidence="1">
        <text>a quinone + NADH + 5 H(+)(in) = a quinol + NAD(+) + 4 H(+)(out)</text>
        <dbReference type="Rhea" id="RHEA:57888"/>
        <dbReference type="ChEBI" id="CHEBI:15378"/>
        <dbReference type="ChEBI" id="CHEBI:24646"/>
        <dbReference type="ChEBI" id="CHEBI:57540"/>
        <dbReference type="ChEBI" id="CHEBI:57945"/>
        <dbReference type="ChEBI" id="CHEBI:132124"/>
    </reaction>
</comment>
<comment type="subunit">
    <text evidence="1">NDH-1 is composed of 14 different subunits. Subunits NuoA, H, J, K, L, M, N constitute the membrane sector of the complex.</text>
</comment>
<comment type="subcellular location">
    <subcellularLocation>
        <location evidence="1">Cell inner membrane</location>
        <topology evidence="1">Multi-pass membrane protein</topology>
    </subcellularLocation>
</comment>
<comment type="similarity">
    <text evidence="1">Belongs to the complex I subunit 2 family.</text>
</comment>
<gene>
    <name evidence="1" type="primary">nuoN</name>
    <name type="ordered locus">FTA_1925</name>
</gene>
<evidence type="ECO:0000255" key="1">
    <source>
        <dbReference type="HAMAP-Rule" id="MF_00445"/>
    </source>
</evidence>
<reference key="1">
    <citation type="journal article" date="2009" name="PLoS ONE">
        <title>Complete genome sequence of Francisella tularensis subspecies holarctica FTNF002-00.</title>
        <authorList>
            <person name="Barabote R.D."/>
            <person name="Xie G."/>
            <person name="Brettin T.S."/>
            <person name="Hinrichs S.H."/>
            <person name="Fey P.D."/>
            <person name="Jay J.J."/>
            <person name="Engle J.L."/>
            <person name="Godbole S.D."/>
            <person name="Noronha J.M."/>
            <person name="Scheuermann R.H."/>
            <person name="Zhou L.W."/>
            <person name="Lion C."/>
            <person name="Dempsey M.P."/>
        </authorList>
    </citation>
    <scope>NUCLEOTIDE SEQUENCE [LARGE SCALE GENOMIC DNA]</scope>
    <source>
        <strain>FTNF002-00 / FTA</strain>
    </source>
</reference>
<proteinExistence type="inferred from homology"/>
<organism>
    <name type="scientific">Francisella tularensis subsp. holarctica (strain FTNF002-00 / FTA)</name>
    <dbReference type="NCBI Taxonomy" id="458234"/>
    <lineage>
        <taxon>Bacteria</taxon>
        <taxon>Pseudomonadati</taxon>
        <taxon>Pseudomonadota</taxon>
        <taxon>Gammaproteobacteria</taxon>
        <taxon>Thiotrichales</taxon>
        <taxon>Francisellaceae</taxon>
        <taxon>Francisella</taxon>
    </lineage>
</organism>
<feature type="chain" id="PRO_0000391147" description="NADH-quinone oxidoreductase subunit N">
    <location>
        <begin position="1"/>
        <end position="485"/>
    </location>
</feature>
<feature type="transmembrane region" description="Helical" evidence="1">
    <location>
        <begin position="10"/>
        <end position="30"/>
    </location>
</feature>
<feature type="transmembrane region" description="Helical" evidence="1">
    <location>
        <begin position="40"/>
        <end position="60"/>
    </location>
</feature>
<feature type="transmembrane region" description="Helical" evidence="1">
    <location>
        <begin position="71"/>
        <end position="91"/>
    </location>
</feature>
<feature type="transmembrane region" description="Helical" evidence="1">
    <location>
        <begin position="107"/>
        <end position="127"/>
    </location>
</feature>
<feature type="transmembrane region" description="Helical" evidence="1">
    <location>
        <begin position="129"/>
        <end position="149"/>
    </location>
</feature>
<feature type="transmembrane region" description="Helical" evidence="1">
    <location>
        <begin position="164"/>
        <end position="184"/>
    </location>
</feature>
<feature type="transmembrane region" description="Helical" evidence="1">
    <location>
        <begin position="209"/>
        <end position="229"/>
    </location>
</feature>
<feature type="transmembrane region" description="Helical" evidence="1">
    <location>
        <begin position="248"/>
        <end position="268"/>
    </location>
</feature>
<feature type="transmembrane region" description="Helical" evidence="1">
    <location>
        <begin position="276"/>
        <end position="296"/>
    </location>
</feature>
<feature type="transmembrane region" description="Helical" evidence="1">
    <location>
        <begin position="304"/>
        <end position="324"/>
    </location>
</feature>
<feature type="transmembrane region" description="Helical" evidence="1">
    <location>
        <begin position="336"/>
        <end position="356"/>
    </location>
</feature>
<feature type="transmembrane region" description="Helical" evidence="1">
    <location>
        <begin position="377"/>
        <end position="397"/>
    </location>
</feature>
<feature type="transmembrane region" description="Helical" evidence="1">
    <location>
        <begin position="410"/>
        <end position="430"/>
    </location>
</feature>
<feature type="transmembrane region" description="Helical" evidence="1">
    <location>
        <begin position="454"/>
        <end position="474"/>
    </location>
</feature>